<accession>Q5B3K6</accession>
<accession>C8V9U6</accession>
<feature type="signal peptide" evidence="2">
    <location>
        <begin position="1"/>
        <end position="22"/>
    </location>
</feature>
<feature type="chain" id="PRO_0000043255" description="Ribonuclease T2-like">
    <location>
        <begin position="23"/>
        <end position="417"/>
    </location>
</feature>
<feature type="region of interest" description="Disordered" evidence="5">
    <location>
        <begin position="274"/>
        <end position="296"/>
    </location>
</feature>
<feature type="compositionally biased region" description="Basic and acidic residues" evidence="5">
    <location>
        <begin position="276"/>
        <end position="288"/>
    </location>
</feature>
<feature type="active site" evidence="1">
    <location>
        <position position="92"/>
    </location>
</feature>
<feature type="active site" evidence="1">
    <location>
        <position position="150"/>
    </location>
</feature>
<feature type="active site" evidence="1">
    <location>
        <position position="154"/>
    </location>
</feature>
<feature type="glycosylation site" description="N-linked (GlcNAc...) asparagine" evidence="2">
    <location>
        <position position="115"/>
    </location>
</feature>
<feature type="glycosylation site" description="N-linked (GlcNAc...) asparagine" evidence="2">
    <location>
        <position position="383"/>
    </location>
</feature>
<feature type="disulfide bond" evidence="1">
    <location>
        <begin position="45"/>
        <end position="63"/>
    </location>
</feature>
<feature type="disulfide bond" evidence="1">
    <location>
        <begin position="52"/>
        <end position="99"/>
    </location>
</feature>
<feature type="disulfide bond" evidence="1">
    <location>
        <begin position="62"/>
        <end position="165"/>
    </location>
</feature>
<feature type="disulfide bond" evidence="1">
    <location>
        <begin position="107"/>
        <end position="157"/>
    </location>
</feature>
<feature type="disulfide bond" evidence="1">
    <location>
        <begin position="229"/>
        <end position="264"/>
    </location>
</feature>
<organism>
    <name type="scientific">Emericella nidulans (strain FGSC A4 / ATCC 38163 / CBS 112.46 / NRRL 194 / M139)</name>
    <name type="common">Aspergillus nidulans</name>
    <dbReference type="NCBI Taxonomy" id="227321"/>
    <lineage>
        <taxon>Eukaryota</taxon>
        <taxon>Fungi</taxon>
        <taxon>Dikarya</taxon>
        <taxon>Ascomycota</taxon>
        <taxon>Pezizomycotina</taxon>
        <taxon>Eurotiomycetes</taxon>
        <taxon>Eurotiomycetidae</taxon>
        <taxon>Eurotiales</taxon>
        <taxon>Aspergillaceae</taxon>
        <taxon>Aspergillus</taxon>
        <taxon>Aspergillus subgen. Nidulantes</taxon>
    </lineage>
</organism>
<evidence type="ECO:0000250" key="1"/>
<evidence type="ECO:0000255" key="2"/>
<evidence type="ECO:0000255" key="3">
    <source>
        <dbReference type="PROSITE-ProRule" id="PRU10045"/>
    </source>
</evidence>
<evidence type="ECO:0000255" key="4">
    <source>
        <dbReference type="PROSITE-ProRule" id="PRU10046"/>
    </source>
</evidence>
<evidence type="ECO:0000256" key="5">
    <source>
        <dbReference type="SAM" id="MobiDB-lite"/>
    </source>
</evidence>
<evidence type="ECO:0000305" key="6"/>
<keyword id="KW-0963">Cytoplasm</keyword>
<keyword id="KW-1015">Disulfide bond</keyword>
<keyword id="KW-0255">Endonuclease</keyword>
<keyword id="KW-0325">Glycoprotein</keyword>
<keyword id="KW-0378">Hydrolase</keyword>
<keyword id="KW-0456">Lyase</keyword>
<keyword id="KW-0540">Nuclease</keyword>
<keyword id="KW-1185">Reference proteome</keyword>
<keyword id="KW-0732">Signal</keyword>
<keyword id="KW-0926">Vacuole</keyword>
<gene>
    <name type="primary">rny1</name>
    <name type="ORF">AN4874</name>
</gene>
<comment type="function">
    <text evidence="1">Rnase which modulates cell survival under stress conditions. Released from the vacuole to the cytoplasm during stress to promote tRNA and rRNA cleavage and to activate separately a downstream pathway that promotes cell death. Involved in cell size, vacuolar morphology and growth at high temperatures and high salt concentration (By similarity).</text>
</comment>
<comment type="catalytic activity">
    <reaction evidence="3 4">
        <text>a ribonucleotidyl-ribonucleotide-RNA + H2O = a 3'-end 3'-phospho-ribonucleotide-RNA + a 5'-end dephospho-ribonucleoside-RNA + H(+)</text>
        <dbReference type="Rhea" id="RHEA:68052"/>
        <dbReference type="Rhea" id="RHEA-COMP:10463"/>
        <dbReference type="Rhea" id="RHEA-COMP:13936"/>
        <dbReference type="Rhea" id="RHEA-COMP:17355"/>
        <dbReference type="ChEBI" id="CHEBI:15377"/>
        <dbReference type="ChEBI" id="CHEBI:15378"/>
        <dbReference type="ChEBI" id="CHEBI:83062"/>
        <dbReference type="ChEBI" id="CHEBI:138284"/>
        <dbReference type="ChEBI" id="CHEBI:173118"/>
        <dbReference type="EC" id="4.6.1.19"/>
    </reaction>
</comment>
<comment type="subcellular location">
    <subcellularLocation>
        <location>Vacuole lumen</location>
    </subcellularLocation>
    <subcellularLocation>
        <location>Cytoplasm</location>
    </subcellularLocation>
    <text evidence="1">Is released from the vacuole to the cytoplasm during stress conditions like oxidative stress or stationary phase stress.</text>
</comment>
<comment type="similarity">
    <text evidence="6">Belongs to the RNase T2 family.</text>
</comment>
<sequence length="417" mass="46091">MSSISGFLGAIPGAQQILQTMAGSLGLAPLSHPEIASSGSTFQQCGKLELSCQTSYHGQDTCCFNYPGGQMLQTQFWDADPAVGPENSWTIHGLWPDHCNGGFDQFCDSHRKYSNISLILIDAGRRDLLDEMSTYWKDYRGDDPNLWEHEWNKHGTCVSTLETHCYSEYYPQQEVVDYFDKTVELFHDLPTYMTLANAGIVPSYTQTYTRHEVEDALSKAHGATVTVRCRSQRLQEVWYFFNVEGPLQTGKFVPSEPDGQTSNCPAKGIIYQPKTPNKDPGHGHEPTKTRHPHGPTGAPFIGKGNLVVSTMGQQRGCIIGRGTWYSSGTCADFRAKRASGDTFTLSSRKGPCAFKDDIFTCGSYISSPAEFSAEDGKLSYHGNTTFFADKAPKGKVQSDIFVSEADHPIELSIAWRG</sequence>
<protein>
    <recommendedName>
        <fullName>Ribonuclease T2-like</fullName>
        <shortName>RNase T2-like</shortName>
        <ecNumber>4.6.1.19</ecNumber>
    </recommendedName>
</protein>
<proteinExistence type="inferred from homology"/>
<dbReference type="EC" id="4.6.1.19"/>
<dbReference type="EMBL" id="AACD01000084">
    <property type="protein sequence ID" value="EAA60952.1"/>
    <property type="molecule type" value="Genomic_DNA"/>
</dbReference>
<dbReference type="EMBL" id="BN001303">
    <property type="protein sequence ID" value="CBF76577.1"/>
    <property type="molecule type" value="Genomic_DNA"/>
</dbReference>
<dbReference type="RefSeq" id="XP_662478.1">
    <property type="nucleotide sequence ID" value="XM_657386.1"/>
</dbReference>
<dbReference type="SMR" id="Q5B3K6"/>
<dbReference type="FunCoup" id="Q5B3K6">
    <property type="interactions" value="135"/>
</dbReference>
<dbReference type="GlyCosmos" id="Q5B3K6">
    <property type="glycosylation" value="2 sites, No reported glycans"/>
</dbReference>
<dbReference type="EnsemblFungi" id="CBF76577">
    <property type="protein sequence ID" value="CBF76577"/>
    <property type="gene ID" value="ANIA_04874"/>
</dbReference>
<dbReference type="KEGG" id="ani:ANIA_04874"/>
<dbReference type="VEuPathDB" id="FungiDB:AN4874"/>
<dbReference type="eggNOG" id="KOG1642">
    <property type="taxonomic scope" value="Eukaryota"/>
</dbReference>
<dbReference type="HOGENOM" id="CLU_037966_0_1_1"/>
<dbReference type="InParanoid" id="Q5B3K6"/>
<dbReference type="OMA" id="YMSEYWK"/>
<dbReference type="OrthoDB" id="435754at2759"/>
<dbReference type="Proteomes" id="UP000000560">
    <property type="component" value="Chromosome III"/>
</dbReference>
<dbReference type="GO" id="GO:0005576">
    <property type="term" value="C:extracellular region"/>
    <property type="evidence" value="ECO:0000318"/>
    <property type="project" value="GO_Central"/>
</dbReference>
<dbReference type="GO" id="GO:0005775">
    <property type="term" value="C:vacuolar lumen"/>
    <property type="evidence" value="ECO:0007669"/>
    <property type="project" value="UniProtKB-SubCell"/>
</dbReference>
<dbReference type="GO" id="GO:0033897">
    <property type="term" value="F:ribonuclease T2 activity"/>
    <property type="evidence" value="ECO:0007669"/>
    <property type="project" value="UniProtKB-EC"/>
</dbReference>
<dbReference type="GO" id="GO:0003723">
    <property type="term" value="F:RNA binding"/>
    <property type="evidence" value="ECO:0007669"/>
    <property type="project" value="InterPro"/>
</dbReference>
<dbReference type="GO" id="GO:0004521">
    <property type="term" value="F:RNA endonuclease activity"/>
    <property type="evidence" value="ECO:0000318"/>
    <property type="project" value="GO_Central"/>
</dbReference>
<dbReference type="GO" id="GO:0006401">
    <property type="term" value="P:RNA catabolic process"/>
    <property type="evidence" value="ECO:0000318"/>
    <property type="project" value="GO_Central"/>
</dbReference>
<dbReference type="CDD" id="cd01061">
    <property type="entry name" value="RNase_T2_euk"/>
    <property type="match status" value="1"/>
</dbReference>
<dbReference type="FunFam" id="3.90.730.10:FF:000004">
    <property type="entry name" value="Ribonuclease T2-like"/>
    <property type="match status" value="1"/>
</dbReference>
<dbReference type="Gene3D" id="3.90.730.10">
    <property type="entry name" value="Ribonuclease T2-like"/>
    <property type="match status" value="1"/>
</dbReference>
<dbReference type="InterPro" id="IPR033697">
    <property type="entry name" value="Ribonuclease_T2_eukaryotic"/>
</dbReference>
<dbReference type="InterPro" id="IPR001568">
    <property type="entry name" value="RNase_T2-like"/>
</dbReference>
<dbReference type="InterPro" id="IPR036430">
    <property type="entry name" value="RNase_T2-like_sf"/>
</dbReference>
<dbReference type="InterPro" id="IPR018188">
    <property type="entry name" value="RNase_T2_His_AS_1"/>
</dbReference>
<dbReference type="InterPro" id="IPR033130">
    <property type="entry name" value="RNase_T2_His_AS_2"/>
</dbReference>
<dbReference type="PANTHER" id="PTHR11240">
    <property type="entry name" value="RIBONUCLEASE T2"/>
    <property type="match status" value="1"/>
</dbReference>
<dbReference type="PANTHER" id="PTHR11240:SF22">
    <property type="entry name" value="RIBONUCLEASE T2"/>
    <property type="match status" value="1"/>
</dbReference>
<dbReference type="Pfam" id="PF00445">
    <property type="entry name" value="Ribonuclease_T2"/>
    <property type="match status" value="1"/>
</dbReference>
<dbReference type="Pfam" id="PF25488">
    <property type="entry name" value="RNaseT2L_C"/>
    <property type="match status" value="1"/>
</dbReference>
<dbReference type="SUPFAM" id="SSF55895">
    <property type="entry name" value="Ribonuclease Rh-like"/>
    <property type="match status" value="1"/>
</dbReference>
<dbReference type="PROSITE" id="PS00530">
    <property type="entry name" value="RNASE_T2_1"/>
    <property type="match status" value="1"/>
</dbReference>
<dbReference type="PROSITE" id="PS00531">
    <property type="entry name" value="RNASE_T2_2"/>
    <property type="match status" value="1"/>
</dbReference>
<reference key="1">
    <citation type="journal article" date="2005" name="Nature">
        <title>Sequencing of Aspergillus nidulans and comparative analysis with A. fumigatus and A. oryzae.</title>
        <authorList>
            <person name="Galagan J.E."/>
            <person name="Calvo S.E."/>
            <person name="Cuomo C."/>
            <person name="Ma L.-J."/>
            <person name="Wortman J.R."/>
            <person name="Batzoglou S."/>
            <person name="Lee S.-I."/>
            <person name="Bastuerkmen M."/>
            <person name="Spevak C.C."/>
            <person name="Clutterbuck J."/>
            <person name="Kapitonov V."/>
            <person name="Jurka J."/>
            <person name="Scazzocchio C."/>
            <person name="Farman M.L."/>
            <person name="Butler J."/>
            <person name="Purcell S."/>
            <person name="Harris S."/>
            <person name="Braus G.H."/>
            <person name="Draht O."/>
            <person name="Busch S."/>
            <person name="D'Enfert C."/>
            <person name="Bouchier C."/>
            <person name="Goldman G.H."/>
            <person name="Bell-Pedersen D."/>
            <person name="Griffiths-Jones S."/>
            <person name="Doonan J.H."/>
            <person name="Yu J."/>
            <person name="Vienken K."/>
            <person name="Pain A."/>
            <person name="Freitag M."/>
            <person name="Selker E.U."/>
            <person name="Archer D.B."/>
            <person name="Penalva M.A."/>
            <person name="Oakley B.R."/>
            <person name="Momany M."/>
            <person name="Tanaka T."/>
            <person name="Kumagai T."/>
            <person name="Asai K."/>
            <person name="Machida M."/>
            <person name="Nierman W.C."/>
            <person name="Denning D.W."/>
            <person name="Caddick M.X."/>
            <person name="Hynes M."/>
            <person name="Paoletti M."/>
            <person name="Fischer R."/>
            <person name="Miller B.L."/>
            <person name="Dyer P.S."/>
            <person name="Sachs M.S."/>
            <person name="Osmani S.A."/>
            <person name="Birren B.W."/>
        </authorList>
    </citation>
    <scope>NUCLEOTIDE SEQUENCE [LARGE SCALE GENOMIC DNA]</scope>
    <source>
        <strain>FGSC A4 / ATCC 38163 / CBS 112.46 / NRRL 194 / M139</strain>
    </source>
</reference>
<reference key="2">
    <citation type="journal article" date="2009" name="Fungal Genet. Biol.">
        <title>The 2008 update of the Aspergillus nidulans genome annotation: a community effort.</title>
        <authorList>
            <person name="Wortman J.R."/>
            <person name="Gilsenan J.M."/>
            <person name="Joardar V."/>
            <person name="Deegan J."/>
            <person name="Clutterbuck J."/>
            <person name="Andersen M.R."/>
            <person name="Archer D."/>
            <person name="Bencina M."/>
            <person name="Braus G."/>
            <person name="Coutinho P."/>
            <person name="von Dohren H."/>
            <person name="Doonan J."/>
            <person name="Driessen A.J."/>
            <person name="Durek P."/>
            <person name="Espeso E."/>
            <person name="Fekete E."/>
            <person name="Flipphi M."/>
            <person name="Estrada C.G."/>
            <person name="Geysens S."/>
            <person name="Goldman G."/>
            <person name="de Groot P.W."/>
            <person name="Hansen K."/>
            <person name="Harris S.D."/>
            <person name="Heinekamp T."/>
            <person name="Helmstaedt K."/>
            <person name="Henrissat B."/>
            <person name="Hofmann G."/>
            <person name="Homan T."/>
            <person name="Horio T."/>
            <person name="Horiuchi H."/>
            <person name="James S."/>
            <person name="Jones M."/>
            <person name="Karaffa L."/>
            <person name="Karanyi Z."/>
            <person name="Kato M."/>
            <person name="Keller N."/>
            <person name="Kelly D.E."/>
            <person name="Kiel J.A."/>
            <person name="Kim J.M."/>
            <person name="van der Klei I.J."/>
            <person name="Klis F.M."/>
            <person name="Kovalchuk A."/>
            <person name="Krasevec N."/>
            <person name="Kubicek C.P."/>
            <person name="Liu B."/>
            <person name="Maccabe A."/>
            <person name="Meyer V."/>
            <person name="Mirabito P."/>
            <person name="Miskei M."/>
            <person name="Mos M."/>
            <person name="Mullins J."/>
            <person name="Nelson D.R."/>
            <person name="Nielsen J."/>
            <person name="Oakley B.R."/>
            <person name="Osmani S.A."/>
            <person name="Pakula T."/>
            <person name="Paszewski A."/>
            <person name="Paulsen I."/>
            <person name="Pilsyk S."/>
            <person name="Pocsi I."/>
            <person name="Punt P.J."/>
            <person name="Ram A.F."/>
            <person name="Ren Q."/>
            <person name="Robellet X."/>
            <person name="Robson G."/>
            <person name="Seiboth B."/>
            <person name="van Solingen P."/>
            <person name="Specht T."/>
            <person name="Sun J."/>
            <person name="Taheri-Talesh N."/>
            <person name="Takeshita N."/>
            <person name="Ussery D."/>
            <person name="vanKuyk P.A."/>
            <person name="Visser H."/>
            <person name="van de Vondervoort P.J."/>
            <person name="de Vries R.P."/>
            <person name="Walton J."/>
            <person name="Xiang X."/>
            <person name="Xiong Y."/>
            <person name="Zeng A.P."/>
            <person name="Brandt B.W."/>
            <person name="Cornell M.J."/>
            <person name="van den Hondel C.A."/>
            <person name="Visser J."/>
            <person name="Oliver S.G."/>
            <person name="Turner G."/>
        </authorList>
    </citation>
    <scope>GENOME REANNOTATION</scope>
    <source>
        <strain>FGSC A4 / ATCC 38163 / CBS 112.46 / NRRL 194 / M139</strain>
    </source>
</reference>
<name>RNY1_EMENI</name>